<keyword id="KW-0963">Cytoplasm</keyword>
<keyword id="KW-0206">Cytoskeleton</keyword>
<keyword id="KW-1185">Reference proteome</keyword>
<comment type="function">
    <text evidence="1">May play a role in keratin cytoskeleton disassembly.</text>
</comment>
<comment type="subcellular location">
    <subcellularLocation>
        <location evidence="1">Cytoplasm</location>
        <location evidence="1">Cytoskeleton</location>
    </subcellularLocation>
    <text evidence="1">Colocalizes with keratin filaments.</text>
</comment>
<comment type="similarity">
    <text evidence="3">Belongs to the FAM83 family.</text>
</comment>
<evidence type="ECO:0000250" key="1">
    <source>
        <dbReference type="UniProtKB" id="Q6ZRV2"/>
    </source>
</evidence>
<evidence type="ECO:0000256" key="2">
    <source>
        <dbReference type="SAM" id="MobiDB-lite"/>
    </source>
</evidence>
<evidence type="ECO:0000305" key="3"/>
<feature type="chain" id="PRO_0000324491" description="Protein FAM83H">
    <location>
        <begin position="1"/>
        <end position="1277"/>
    </location>
</feature>
<feature type="region of interest" description="Disordered" evidence="2">
    <location>
        <begin position="1"/>
        <end position="20"/>
    </location>
</feature>
<feature type="region of interest" description="Disordered" evidence="2">
    <location>
        <begin position="67"/>
        <end position="98"/>
    </location>
</feature>
<feature type="region of interest" description="Disordered" evidence="2">
    <location>
        <begin position="717"/>
        <end position="756"/>
    </location>
</feature>
<feature type="region of interest" description="Disordered" evidence="2">
    <location>
        <begin position="772"/>
        <end position="805"/>
    </location>
</feature>
<feature type="region of interest" description="Disordered" evidence="2">
    <location>
        <begin position="971"/>
        <end position="1018"/>
    </location>
</feature>
<feature type="region of interest" description="Disordered" evidence="2">
    <location>
        <begin position="1070"/>
        <end position="1130"/>
    </location>
</feature>
<feature type="region of interest" description="Disordered" evidence="2">
    <location>
        <begin position="1158"/>
        <end position="1225"/>
    </location>
</feature>
<feature type="region of interest" description="Disordered" evidence="2">
    <location>
        <begin position="1247"/>
        <end position="1266"/>
    </location>
</feature>
<feature type="compositionally biased region" description="Polar residues" evidence="2">
    <location>
        <begin position="1"/>
        <end position="12"/>
    </location>
</feature>
<feature type="compositionally biased region" description="Basic and acidic residues" evidence="2">
    <location>
        <begin position="724"/>
        <end position="750"/>
    </location>
</feature>
<feature type="compositionally biased region" description="Polar residues" evidence="2">
    <location>
        <begin position="777"/>
        <end position="805"/>
    </location>
</feature>
<feature type="compositionally biased region" description="Polar residues" evidence="2">
    <location>
        <begin position="971"/>
        <end position="982"/>
    </location>
</feature>
<feature type="compositionally biased region" description="Polar residues" evidence="2">
    <location>
        <begin position="993"/>
        <end position="1015"/>
    </location>
</feature>
<feature type="compositionally biased region" description="Polar residues" evidence="2">
    <location>
        <begin position="1112"/>
        <end position="1130"/>
    </location>
</feature>
<feature type="compositionally biased region" description="Low complexity" evidence="2">
    <location>
        <begin position="1204"/>
        <end position="1215"/>
    </location>
</feature>
<feature type="compositionally biased region" description="Basic and acidic residues" evidence="2">
    <location>
        <begin position="1247"/>
        <end position="1263"/>
    </location>
</feature>
<protein>
    <recommendedName>
        <fullName evidence="3">Protein FAM83H</fullName>
    </recommendedName>
</protein>
<proteinExistence type="evidence at transcript level"/>
<name>FA83H_XENTR</name>
<accession>A9JRM0</accession>
<sequence length="1277" mass="143246">MARRSQSSSQGENPLDPNYLPPHYKEYYRIAIDALAENGPEAYEQFLMEEGAPDFLCPNEVEHISRSLQRPPESGQENPYPDSVYGSQEDADGSSGTYWPMDSDTAAPELDLGWPTIYGFQGTEVTTLMHPPPPDNPTIKEEVRRMIRSAQQVIGIVMDIFTDADILSELLDAANRRIPVYIILDQMNCQLFLDMAAKYRVNLNYVEFLRVRTVSGPTYFCRKGSTFKGNLQEKFLLVDCTMVLSGTYSFMWSFEKIHRSIAHIFQGELVSSFDEEFRILFAQSDPLIPSESALAKMDKSYMGMVPFAGPRPMFDRKLHFMFPREENPSQQFPSYGVDPDRHYFQPFRREDMIRQTMDPGGMRMYGKNLGDPMDKMQMSFVQNKQLEAMEAFKRHSFAEGTFENYTSSRQYSRQMFMNNNDEYRLQSSQVQKSQFMQFQSPLGTARPQGLFEKIRGGRQGLQEMDEFDSRYPTKGLPGEGHFALDGPPMRPGYNPSNSSREVRHGSDQMVIGGEGRFGQRSLGRQKFMCQISPTQKQGMEPKYFFHDQDADKKPQENKQGLRSWRISSYLSGIQSDQDEEGLPIPLDPELYDDALVPVERAVPASDTLFKYSMDPVPPYHPGTAPHDLPYDRANENPMKFSMDPVQLHRPNVPSQDVPMHLERAGNESLVKYSLDPIPPFKPNVAGTDVPMPLERKPTANEILSRYSVDPIPPYKTFGSTGDLSVEKAKENPPAEKEKEEGLLSRHDSFRTRTNPLIQRGSRLRSSLIFSSSKLEQHTSTAESVQEMQKEQSTSELVSENETGRTTSKVAEILQKYRGINKDANSTTVTQAKAASRTIHEESEDGQSVSAEEVAYKAVESTVDTKGSMSHVQQESQYRSVASSHLESLLGKHQTTLSMSKVEQMTSSIQTIGNISAAPSESGPTVPELSEVHKQSSISHMQQESHYKSVVTSKLEGLLNRDQQVMSMSKVEQTSSTIQTIGNISPAPPDSKESGPTITEVTEATQSSENLPTRPNSAFHFGSALESMSQNPTPSSSLNKSEEDLAKTDQNFFRKGSMRLKQFLQSKAEKKAEEDLASDNAKAEKQHSTLRRLSKSDSQEVAASTDMEEKSAKSLSVSPPKTSSISQSRLSASTSNVIFSSNLRDDTKVILEQISANSQKNRAEMVKQAQQIQATGDPDPATSKPESKTEGTASTDAAAITRTGSFLSRSRFSRPSPSSPEDRDILLKRMESIRKEKRVYSRFEVFCKKDEQPSHADDNDDKKAGKIIPKLLGNLIKK</sequence>
<organism>
    <name type="scientific">Xenopus tropicalis</name>
    <name type="common">Western clawed frog</name>
    <name type="synonym">Silurana tropicalis</name>
    <dbReference type="NCBI Taxonomy" id="8364"/>
    <lineage>
        <taxon>Eukaryota</taxon>
        <taxon>Metazoa</taxon>
        <taxon>Chordata</taxon>
        <taxon>Craniata</taxon>
        <taxon>Vertebrata</taxon>
        <taxon>Euteleostomi</taxon>
        <taxon>Amphibia</taxon>
        <taxon>Batrachia</taxon>
        <taxon>Anura</taxon>
        <taxon>Pipoidea</taxon>
        <taxon>Pipidae</taxon>
        <taxon>Xenopodinae</taxon>
        <taxon>Xenopus</taxon>
        <taxon>Silurana</taxon>
    </lineage>
</organism>
<gene>
    <name evidence="1" type="primary">fam83h</name>
</gene>
<reference key="1">
    <citation type="submission" date="2007-12" db="EMBL/GenBank/DDBJ databases">
        <authorList>
            <consortium name="NIH - Xenopus Gene Collection (XGC) project"/>
        </authorList>
    </citation>
    <scope>NUCLEOTIDE SEQUENCE [LARGE SCALE MRNA]</scope>
    <source>
        <tissue>Brain</tissue>
    </source>
</reference>
<dbReference type="EMBL" id="BC155711">
    <property type="protein sequence ID" value="AAI55712.1"/>
    <property type="molecule type" value="mRNA"/>
</dbReference>
<dbReference type="RefSeq" id="XP_002943716.3">
    <property type="nucleotide sequence ID" value="XM_002943670.4"/>
</dbReference>
<dbReference type="RefSeq" id="XP_031759342.1">
    <property type="nucleotide sequence ID" value="XM_031903482.1"/>
</dbReference>
<dbReference type="RefSeq" id="XP_031759344.1">
    <property type="nucleotide sequence ID" value="XM_031903484.1"/>
</dbReference>
<dbReference type="RefSeq" id="XP_031759345.1">
    <property type="nucleotide sequence ID" value="XM_031903485.1"/>
</dbReference>
<dbReference type="RefSeq" id="XP_031759346.1">
    <property type="nucleotide sequence ID" value="XM_031903486.1"/>
</dbReference>
<dbReference type="SMR" id="A9JRM0"/>
<dbReference type="FunCoup" id="A9JRM0">
    <property type="interactions" value="1161"/>
</dbReference>
<dbReference type="STRING" id="8364.ENSXETP00000033700"/>
<dbReference type="PaxDb" id="8364-ENSXETP00000011553"/>
<dbReference type="GeneID" id="100135103"/>
<dbReference type="AGR" id="Xenbase:XB-GENE-5797458"/>
<dbReference type="Xenbase" id="XB-GENE-5797458">
    <property type="gene designation" value="fam83h"/>
</dbReference>
<dbReference type="eggNOG" id="ENOG502QW7K">
    <property type="taxonomic scope" value="Eukaryota"/>
</dbReference>
<dbReference type="InParanoid" id="A9JRM0"/>
<dbReference type="Proteomes" id="UP000008143">
    <property type="component" value="Chromosome 6"/>
</dbReference>
<dbReference type="Bgee" id="ENSXETG00000005283">
    <property type="expression patterns" value="Expressed in early embryo and 18 other cell types or tissues"/>
</dbReference>
<dbReference type="GO" id="GO:0005737">
    <property type="term" value="C:cytoplasm"/>
    <property type="evidence" value="ECO:0007669"/>
    <property type="project" value="UniProtKB-KW"/>
</dbReference>
<dbReference type="GO" id="GO:0005856">
    <property type="term" value="C:cytoskeleton"/>
    <property type="evidence" value="ECO:0007669"/>
    <property type="project" value="UniProtKB-SubCell"/>
</dbReference>
<dbReference type="GO" id="GO:0045104">
    <property type="term" value="P:intermediate filament cytoskeleton organization"/>
    <property type="evidence" value="ECO:0000250"/>
    <property type="project" value="UniProtKB"/>
</dbReference>
<dbReference type="CDD" id="cd09188">
    <property type="entry name" value="PLDc_FAM83H_N"/>
    <property type="match status" value="1"/>
</dbReference>
<dbReference type="FunFam" id="3.30.870.10:FF:000004">
    <property type="entry name" value="protein FAM83H isoform X2"/>
    <property type="match status" value="1"/>
</dbReference>
<dbReference type="Gene3D" id="3.30.870.10">
    <property type="entry name" value="Endonuclease Chain A"/>
    <property type="match status" value="1"/>
</dbReference>
<dbReference type="InterPro" id="IPR050944">
    <property type="entry name" value="FAM83"/>
</dbReference>
<dbReference type="InterPro" id="IPR041996">
    <property type="entry name" value="PLDc_FAM83H_N"/>
</dbReference>
<dbReference type="InterPro" id="IPR012461">
    <property type="entry name" value="SACK1"/>
</dbReference>
<dbReference type="PANTHER" id="PTHR16181">
    <property type="entry name" value="PROTEIN FAM83A-RELATED"/>
    <property type="match status" value="1"/>
</dbReference>
<dbReference type="PANTHER" id="PTHR16181:SF29">
    <property type="entry name" value="PROTEIN FAM83A-RELATED"/>
    <property type="match status" value="1"/>
</dbReference>
<dbReference type="Pfam" id="PF07894">
    <property type="entry name" value="SACK1"/>
    <property type="match status" value="1"/>
</dbReference>
<dbReference type="SUPFAM" id="SSF56024">
    <property type="entry name" value="Phospholipase D/nuclease"/>
    <property type="match status" value="1"/>
</dbReference>